<evidence type="ECO:0000250" key="1">
    <source>
        <dbReference type="UniProtKB" id="K7WDL7"/>
    </source>
</evidence>
<evidence type="ECO:0000250" key="2">
    <source>
        <dbReference type="UniProtKB" id="Q9STX2"/>
    </source>
</evidence>
<evidence type="ECO:0000269" key="3">
    <source>
    </source>
</evidence>
<evidence type="ECO:0000303" key="4">
    <source>
    </source>
</evidence>
<evidence type="ECO:0000305" key="5"/>
<evidence type="ECO:0000305" key="6">
    <source>
    </source>
</evidence>
<evidence type="ECO:0000312" key="7">
    <source>
        <dbReference type="EMBL" id="ASM62109.1"/>
    </source>
</evidence>
<proteinExistence type="evidence at protein level"/>
<organism evidence="7">
    <name type="scientific">Nepeta cataria</name>
    <name type="common">Catnip</name>
    <dbReference type="NCBI Taxonomy" id="39347"/>
    <lineage>
        <taxon>Eukaryota</taxon>
        <taxon>Viridiplantae</taxon>
        <taxon>Streptophyta</taxon>
        <taxon>Embryophyta</taxon>
        <taxon>Tracheophyta</taxon>
        <taxon>Spermatophyta</taxon>
        <taxon>Magnoliopsida</taxon>
        <taxon>eudicotyledons</taxon>
        <taxon>Gunneridae</taxon>
        <taxon>Pentapetalae</taxon>
        <taxon>asterids</taxon>
        <taxon>lamiids</taxon>
        <taxon>Lamiales</taxon>
        <taxon>Lamiaceae</taxon>
        <taxon>Nepetoideae</taxon>
        <taxon>Mentheae</taxon>
        <taxon>Nepetinae</taxon>
        <taxon>Nepeta</taxon>
    </lineage>
</organism>
<comment type="function">
    <text evidence="3 5">Iridoid synthase that catalyzes the first step in generation of the iridoid ring scaffold using the linear monoterpene (6E)-8-oxogeranial as substrate (PubMed:29091815). Iridoids comprise a large family of distinctive bicyclic monoterpenes that possess a wide range of pharmacological activities, including anticancer, anti-inflammatory, antifungal and antibacterial activities (Probable). Catalyzes the conversion of the linear monoterpene (6E)-8-oxogeranial to (S)-8-oxocitronellyl enol, a precursor of nepetalactones, which are metabolites that are both insect-repellent and have euphoric effect in cats (PubMed:29091815).</text>
</comment>
<comment type="catalytic activity">
    <reaction evidence="3">
        <text>(S)-8-oxocitronellyl enol + NADP(+) = (6E)-8-oxogeranial + NADPH + H(+)</text>
        <dbReference type="Rhea" id="RHEA:62592"/>
        <dbReference type="ChEBI" id="CHEBI:15378"/>
        <dbReference type="ChEBI" id="CHEBI:57783"/>
        <dbReference type="ChEBI" id="CHEBI:58349"/>
        <dbReference type="ChEBI" id="CHEBI:64239"/>
        <dbReference type="ChEBI" id="CHEBI:144481"/>
        <dbReference type="EC" id="1.3.1.122"/>
    </reaction>
    <physiologicalReaction direction="right-to-left" evidence="3">
        <dbReference type="Rhea" id="RHEA:62594"/>
    </physiologicalReaction>
</comment>
<comment type="catalytic activity">
    <reaction evidence="1">
        <text>(S)-8-oxocitronellyl enol + NAD(+) = (6E)-8-oxogeranial + NADH + H(+)</text>
        <dbReference type="Rhea" id="RHEA:62596"/>
        <dbReference type="ChEBI" id="CHEBI:15378"/>
        <dbReference type="ChEBI" id="CHEBI:57540"/>
        <dbReference type="ChEBI" id="CHEBI:57945"/>
        <dbReference type="ChEBI" id="CHEBI:64239"/>
        <dbReference type="ChEBI" id="CHEBI:144481"/>
        <dbReference type="EC" id="1.3.1.122"/>
    </reaction>
    <physiologicalReaction direction="right-to-left" evidence="1">
        <dbReference type="Rhea" id="RHEA:62598"/>
    </physiologicalReaction>
</comment>
<comment type="similarity">
    <text evidence="5">Belongs to the short-chain dehydrogenases/reductases (SDR) family.</text>
</comment>
<name>ISY1_NEPCA</name>
<reference key="1">
    <citation type="journal article" date="2018" name="Phytochemistry">
        <title>Identification of iridoid synthases from Nepeta species: Iridoid cyclization does not determine nepetalactone stereochemistry.</title>
        <authorList>
            <person name="Sherden N.H."/>
            <person name="Lichman B."/>
            <person name="Caputi L."/>
            <person name="Zhao D."/>
            <person name="Kamileen M.O."/>
            <person name="Buell C.R."/>
            <person name="O'Connor S.E."/>
        </authorList>
    </citation>
    <scope>NUCLEOTIDE SEQUENCE [MRNA]</scope>
    <scope>FUNCTION</scope>
    <scope>CATALYTIC ACTIVITY</scope>
    <scope>ACTIVE SITES</scope>
</reference>
<protein>
    <recommendedName>
        <fullName evidence="5">(S)-8-oxocitronellyl enol synthase ISY1</fullName>
        <ecNumber evidence="3">1.3.1.122</ecNumber>
    </recommendedName>
    <alternativeName>
        <fullName evidence="4">Iridoid synthase 1</fullName>
        <shortName evidence="4">NcISY1</shortName>
    </alternativeName>
</protein>
<accession>A0A221J5W8</accession>
<keyword id="KW-0520">NAD</keyword>
<keyword id="KW-0521">NADP</keyword>
<keyword id="KW-0560">Oxidoreductase</keyword>
<sequence length="388" mass="43916">MSWWWAGAIGAAKKKIDEDEAPRNYESVALIVGVTGIVGNSLAEILPLSDTPGGPWKVYGVARRPRPSWNEDHPITYISCDVLDSVDVEAKLSPLTDVTHIFYATWTKRSTEKENCEANGKMLKNVLNAMIPNCPNLKHICLQTGRKHYLGAFEDLKSKCHDPPLTEDLPRLDSQNYYYTQEDILFEEVQKKEGLTWSVHRPGTIFGFSPYSMMNLVGTLCVYAAICKHEGAVLRFPGCKGAWDGYSDCSDADLIAEHQIWAAVDPYAKNEAFNVSNGDVFKWKHFWKVLAEQFGVECGEYEEGQQVKLQDLMKDKGPVWDKIVRENGLSTTKLEDVGNWWFSDIVLGNECWLDTMNKSKEHGFLGFRNSKNSFISWIDKVKAFKIVP</sequence>
<gene>
    <name evidence="4" type="primary">ISY1</name>
</gene>
<feature type="chain" id="PRO_0000449836" description="(S)-8-oxocitronellyl enol synthase ISY1">
    <location>
        <begin position="1"/>
        <end position="388"/>
    </location>
</feature>
<feature type="active site" evidence="6">
    <location>
        <position position="147"/>
    </location>
</feature>
<feature type="active site" evidence="6">
    <location>
        <position position="178"/>
    </location>
</feature>
<feature type="binding site" evidence="1">
    <location>
        <begin position="35"/>
        <end position="37"/>
    </location>
    <ligand>
        <name>NADP(+)</name>
        <dbReference type="ChEBI" id="CHEBI:58349"/>
    </ligand>
</feature>
<feature type="binding site" evidence="1">
    <location>
        <begin position="63"/>
        <end position="64"/>
    </location>
    <ligand>
        <name>NADP(+)</name>
        <dbReference type="ChEBI" id="CHEBI:58349"/>
    </ligand>
</feature>
<feature type="binding site" evidence="1">
    <location>
        <begin position="81"/>
        <end position="82"/>
    </location>
    <ligand>
        <name>NADP(+)</name>
        <dbReference type="ChEBI" id="CHEBI:58349"/>
    </ligand>
</feature>
<feature type="binding site" evidence="1">
    <location>
        <begin position="105"/>
        <end position="106"/>
    </location>
    <ligand>
        <name>NADP(+)</name>
        <dbReference type="ChEBI" id="CHEBI:58349"/>
    </ligand>
</feature>
<feature type="binding site" evidence="1">
    <location>
        <position position="143"/>
    </location>
    <ligand>
        <name>NADP(+)</name>
        <dbReference type="ChEBI" id="CHEBI:58349"/>
    </ligand>
</feature>
<feature type="binding site" evidence="1">
    <location>
        <position position="178"/>
    </location>
    <ligand>
        <name>NADP(+)</name>
        <dbReference type="ChEBI" id="CHEBI:58349"/>
    </ligand>
</feature>
<feature type="binding site" evidence="2">
    <location>
        <position position="205"/>
    </location>
    <ligand>
        <name>NADP(+)</name>
        <dbReference type="ChEBI" id="CHEBI:58349"/>
    </ligand>
</feature>
<feature type="binding site" evidence="1">
    <location>
        <begin position="212"/>
        <end position="214"/>
    </location>
    <ligand>
        <name>NADP(+)</name>
        <dbReference type="ChEBI" id="CHEBI:58349"/>
    </ligand>
</feature>
<dbReference type="EC" id="1.3.1.122" evidence="3"/>
<dbReference type="EMBL" id="KY882233">
    <property type="protein sequence ID" value="ASM62109.1"/>
    <property type="molecule type" value="mRNA"/>
</dbReference>
<dbReference type="SMR" id="A0A221J5W8"/>
<dbReference type="GO" id="GO:0016627">
    <property type="term" value="F:oxidoreductase activity, acting on the CH-CH group of donors"/>
    <property type="evidence" value="ECO:0007669"/>
    <property type="project" value="UniProtKB-ARBA"/>
</dbReference>
<dbReference type="CDD" id="cd08948">
    <property type="entry name" value="5beta-POR_like_SDR_a"/>
    <property type="match status" value="1"/>
</dbReference>
<dbReference type="FunFam" id="3.40.50.720:FF:000808">
    <property type="entry name" value="Iridoid synthase"/>
    <property type="match status" value="1"/>
</dbReference>
<dbReference type="Gene3D" id="3.40.50.720">
    <property type="entry name" value="NAD(P)-binding Rossmann-like Domain"/>
    <property type="match status" value="1"/>
</dbReference>
<dbReference type="InterPro" id="IPR036291">
    <property type="entry name" value="NAD(P)-bd_dom_sf"/>
</dbReference>
<dbReference type="InterPro" id="IPR055222">
    <property type="entry name" value="PRISE-like_Rossmann-fold"/>
</dbReference>
<dbReference type="PANTHER" id="PTHR32487">
    <property type="entry name" value="3-OXO-DELTA(4,5)-STEROID 5-BETA-REDUCTASE"/>
    <property type="match status" value="1"/>
</dbReference>
<dbReference type="PANTHER" id="PTHR32487:SF0">
    <property type="entry name" value="3-OXO-DELTA(4,5)-STEROID 5-BETA-REDUCTASE"/>
    <property type="match status" value="1"/>
</dbReference>
<dbReference type="Pfam" id="PF22917">
    <property type="entry name" value="PRISE"/>
    <property type="match status" value="1"/>
</dbReference>
<dbReference type="SUPFAM" id="SSF51735">
    <property type="entry name" value="NAD(P)-binding Rossmann-fold domains"/>
    <property type="match status" value="1"/>
</dbReference>